<gene>
    <name evidence="1" type="primary">ccsA</name>
</gene>
<sequence length="327" mass="37326">MIFSILEHILTHISFSVVSIVLTIYFLTFLVNLDEIIGFFDSSDKGIIITFFGITGLLFTRWIYSGHFPLSNLYESLIFLAWAFSIIHMVSYFNKKKKKNLNAITAPSAIFIQGFAASGLLNMPQSAILVPALQSQWLMMHVSMMILGYGALLCGSLLSIALLVITFRKVGPTFLKKNLKKKFLLNELFSFDVLYYINEKNSILLQQNINFSFSRNYYRYQLIEQLDFLSFRIISLGFIFLTIGILSGAVWANETWGSYWNWDPKETWAFITWTIFAIYLHIKTNRNVKGINSAIVAAIGFLLIWICYFGVNLLGIGLHSYGSFTSS</sequence>
<geneLocation type="chloroplast"/>
<dbReference type="EMBL" id="AP009375">
    <property type="protein sequence ID" value="BAF50601.1"/>
    <property type="molecule type" value="Genomic_DNA"/>
</dbReference>
<dbReference type="RefSeq" id="YP_001123776.1">
    <property type="nucleotide sequence ID" value="NC_009274.1"/>
</dbReference>
<dbReference type="SMR" id="A4QLP6"/>
<dbReference type="GeneID" id="4964910"/>
<dbReference type="GO" id="GO:0009535">
    <property type="term" value="C:chloroplast thylakoid membrane"/>
    <property type="evidence" value="ECO:0007669"/>
    <property type="project" value="UniProtKB-SubCell"/>
</dbReference>
<dbReference type="GO" id="GO:0005886">
    <property type="term" value="C:plasma membrane"/>
    <property type="evidence" value="ECO:0007669"/>
    <property type="project" value="TreeGrafter"/>
</dbReference>
<dbReference type="GO" id="GO:0020037">
    <property type="term" value="F:heme binding"/>
    <property type="evidence" value="ECO:0007669"/>
    <property type="project" value="InterPro"/>
</dbReference>
<dbReference type="GO" id="GO:0017004">
    <property type="term" value="P:cytochrome complex assembly"/>
    <property type="evidence" value="ECO:0007669"/>
    <property type="project" value="UniProtKB-UniRule"/>
</dbReference>
<dbReference type="HAMAP" id="MF_01391">
    <property type="entry name" value="CytC_CcsA"/>
    <property type="match status" value="1"/>
</dbReference>
<dbReference type="InterPro" id="IPR002541">
    <property type="entry name" value="Cyt_c_assembly"/>
</dbReference>
<dbReference type="InterPro" id="IPR017562">
    <property type="entry name" value="Cyt_c_biogenesis_CcsA"/>
</dbReference>
<dbReference type="InterPro" id="IPR045062">
    <property type="entry name" value="Cyt_c_biogenesis_CcsA/CcmC"/>
</dbReference>
<dbReference type="NCBIfam" id="TIGR03144">
    <property type="entry name" value="cytochr_II_ccsB"/>
    <property type="match status" value="1"/>
</dbReference>
<dbReference type="PANTHER" id="PTHR30071:SF1">
    <property type="entry name" value="CYTOCHROME B_B6 PROTEIN-RELATED"/>
    <property type="match status" value="1"/>
</dbReference>
<dbReference type="PANTHER" id="PTHR30071">
    <property type="entry name" value="HEME EXPORTER PROTEIN C"/>
    <property type="match status" value="1"/>
</dbReference>
<dbReference type="Pfam" id="PF01578">
    <property type="entry name" value="Cytochrom_C_asm"/>
    <property type="match status" value="1"/>
</dbReference>
<name>CCSA_LOBMA</name>
<keyword id="KW-0150">Chloroplast</keyword>
<keyword id="KW-0201">Cytochrome c-type biogenesis</keyword>
<keyword id="KW-0472">Membrane</keyword>
<keyword id="KW-0934">Plastid</keyword>
<keyword id="KW-0793">Thylakoid</keyword>
<keyword id="KW-0812">Transmembrane</keyword>
<keyword id="KW-1133">Transmembrane helix</keyword>
<comment type="function">
    <text evidence="1">Required during biogenesis of c-type cytochromes (cytochrome c6 and cytochrome f) at the step of heme attachment.</text>
</comment>
<comment type="subunit">
    <text evidence="1">May interact with Ccs1.</text>
</comment>
<comment type="subcellular location">
    <subcellularLocation>
        <location evidence="1">Plastid</location>
        <location evidence="1">Chloroplast thylakoid membrane</location>
        <topology evidence="1">Multi-pass membrane protein</topology>
    </subcellularLocation>
</comment>
<comment type="similarity">
    <text evidence="1">Belongs to the CcmF/CycK/Ccl1/NrfE/CcsA family.</text>
</comment>
<feature type="chain" id="PRO_0000353766" description="Cytochrome c biogenesis protein CcsA">
    <location>
        <begin position="1"/>
        <end position="327"/>
    </location>
</feature>
<feature type="transmembrane region" description="Helical" evidence="1">
    <location>
        <begin position="13"/>
        <end position="33"/>
    </location>
</feature>
<feature type="transmembrane region" description="Helical" evidence="1">
    <location>
        <begin position="46"/>
        <end position="66"/>
    </location>
</feature>
<feature type="transmembrane region" description="Helical" evidence="1">
    <location>
        <begin position="73"/>
        <end position="93"/>
    </location>
</feature>
<feature type="transmembrane region" description="Helical" evidence="1">
    <location>
        <begin position="101"/>
        <end position="121"/>
    </location>
</feature>
<feature type="transmembrane region" description="Helical" evidence="1">
    <location>
        <begin position="145"/>
        <end position="165"/>
    </location>
</feature>
<feature type="transmembrane region" description="Helical" evidence="1">
    <location>
        <begin position="233"/>
        <end position="253"/>
    </location>
</feature>
<feature type="transmembrane region" description="Helical" evidence="1">
    <location>
        <begin position="262"/>
        <end position="282"/>
    </location>
</feature>
<feature type="transmembrane region" description="Helical" evidence="1">
    <location>
        <begin position="294"/>
        <end position="314"/>
    </location>
</feature>
<accession>A4QLP6</accession>
<reference key="1">
    <citation type="submission" date="2007-03" db="EMBL/GenBank/DDBJ databases">
        <title>Sequencing analysis of Lobularia maritima chloroplast DNA.</title>
        <authorList>
            <person name="Hosouchi T."/>
            <person name="Tsuruoka H."/>
            <person name="Kotani H."/>
        </authorList>
    </citation>
    <scope>NUCLEOTIDE SEQUENCE [LARGE SCALE GENOMIC DNA]</scope>
</reference>
<evidence type="ECO:0000255" key="1">
    <source>
        <dbReference type="HAMAP-Rule" id="MF_01391"/>
    </source>
</evidence>
<protein>
    <recommendedName>
        <fullName evidence="1">Cytochrome c biogenesis protein CcsA</fullName>
    </recommendedName>
</protein>
<organism>
    <name type="scientific">Lobularia maritima</name>
    <name type="common">Sweet alyssum</name>
    <name type="synonym">Alyssum maritimum</name>
    <dbReference type="NCBI Taxonomy" id="226051"/>
    <lineage>
        <taxon>Eukaryota</taxon>
        <taxon>Viridiplantae</taxon>
        <taxon>Streptophyta</taxon>
        <taxon>Embryophyta</taxon>
        <taxon>Tracheophyta</taxon>
        <taxon>Spermatophyta</taxon>
        <taxon>Magnoliopsida</taxon>
        <taxon>eudicotyledons</taxon>
        <taxon>Gunneridae</taxon>
        <taxon>Pentapetalae</taxon>
        <taxon>rosids</taxon>
        <taxon>malvids</taxon>
        <taxon>Brassicales</taxon>
        <taxon>Brassicaceae</taxon>
        <taxon>Anastaticeae</taxon>
        <taxon>Lobularia</taxon>
    </lineage>
</organism>
<proteinExistence type="inferred from homology"/>